<keyword id="KW-0903">Direct protein sequencing</keyword>
<keyword id="KW-0372">Hormone</keyword>
<keyword id="KW-0527">Neuropeptide</keyword>
<sequence length="65" mass="6907">YYEAPPDGRHLLLQPAPAAPAVAPAAPASWPHQQRRQALDEFAAAAAAAADAQFQDEEEDGGRRV</sequence>
<organism>
    <name type="scientific">Locusta migratoria</name>
    <name type="common">Migratory locust</name>
    <dbReference type="NCBI Taxonomy" id="7004"/>
    <lineage>
        <taxon>Eukaryota</taxon>
        <taxon>Metazoa</taxon>
        <taxon>Ecdysozoa</taxon>
        <taxon>Arthropoda</taxon>
        <taxon>Hexapoda</taxon>
        <taxon>Insecta</taxon>
        <taxon>Pterygota</taxon>
        <taxon>Neoptera</taxon>
        <taxon>Polyneoptera</taxon>
        <taxon>Orthoptera</taxon>
        <taxon>Caelifera</taxon>
        <taxon>Acrididea</taxon>
        <taxon>Acridomorpha</taxon>
        <taxon>Acridoidea</taxon>
        <taxon>Acrididae</taxon>
        <taxon>Oedipodinae</taxon>
        <taxon>Locusta</taxon>
    </lineage>
</organism>
<accession>P80045</accession>
<evidence type="ECO:0000256" key="1">
    <source>
        <dbReference type="SAM" id="MobiDB-lite"/>
    </source>
</evidence>
<proteinExistence type="evidence at protein level"/>
<comment type="function">
    <text>Neurohormone that anticipates ovarian maturation. Acts as a true gonadotropin and stimulates vitellogenin biosynthesis.</text>
</comment>
<comment type="subunit">
    <text>Monomer.</text>
</comment>
<name>OMP_LOCMI</name>
<protein>
    <recommendedName>
        <fullName>Ovary maturating parsin</fullName>
        <shortName>OMP</shortName>
    </recommendedName>
</protein>
<feature type="chain" id="PRO_0000058044" description="Ovary maturating parsin">
    <location>
        <begin position="1"/>
        <end position="65"/>
    </location>
</feature>
<feature type="region of interest" description="Disordered" evidence="1">
    <location>
        <begin position="17"/>
        <end position="36"/>
    </location>
</feature>
<feature type="compositionally biased region" description="Low complexity" evidence="1">
    <location>
        <begin position="17"/>
        <end position="28"/>
    </location>
</feature>
<feature type="sequence variant">
    <original>A</original>
    <variation>S</variation>
    <location>
        <position position="26"/>
    </location>
</feature>
<dbReference type="PIR" id="S19568">
    <property type="entry name" value="S19568"/>
</dbReference>
<dbReference type="SMR" id="P80045"/>
<dbReference type="GO" id="GO:0005179">
    <property type="term" value="F:hormone activity"/>
    <property type="evidence" value="ECO:0007669"/>
    <property type="project" value="UniProtKB-KW"/>
</dbReference>
<dbReference type="GO" id="GO:0007218">
    <property type="term" value="P:neuropeptide signaling pathway"/>
    <property type="evidence" value="ECO:0007669"/>
    <property type="project" value="UniProtKB-KW"/>
</dbReference>
<reference key="1">
    <citation type="journal article" date="1991" name="Eur. J. Biochem.">
        <title>Physical characterization and sequence identification of the ovary maturating parsin. A new neurohormone purified from the nervous corpora cardiaca of the African locust (Locusta migratoria migratorioides).</title>
        <authorList>
            <person name="Girardie J."/>
            <person name="Richard O."/>
            <person name="Huet J.-C."/>
            <person name="Nespoulous C."/>
            <person name="van Dorsselaer A."/>
            <person name="Pernollet J.-C."/>
        </authorList>
    </citation>
    <scope>PROTEIN SEQUENCE</scope>
    <source>
        <strain>Ssp. migratorioides</strain>
        <tissue>Corpora cardiaca</tissue>
    </source>
</reference>